<sequence>MKKKYYISISLLMTIIVLVFDQVSKWLITISMKVGDSYEIIPNFLNITSHRNNGAAWGILSGKMLFFYIITIIILIVLVIFYIKEAQFNLFMQVAISLLFAGALGNFIDRVLHGEVVDFIDTNIFGYDFPIFNIADSSLTIGVIFVIIALIKDAIINKKEV</sequence>
<keyword id="KW-0064">Aspartyl protease</keyword>
<keyword id="KW-1003">Cell membrane</keyword>
<keyword id="KW-0378">Hydrolase</keyword>
<keyword id="KW-0472">Membrane</keyword>
<keyword id="KW-0645">Protease</keyword>
<keyword id="KW-0812">Transmembrane</keyword>
<keyword id="KW-1133">Transmembrane helix</keyword>
<dbReference type="EC" id="3.4.23.36" evidence="1"/>
<dbReference type="EMBL" id="AE015929">
    <property type="protein sequence ID" value="AAO04468.1"/>
    <property type="status" value="ALT_INIT"/>
    <property type="molecule type" value="Genomic_DNA"/>
</dbReference>
<dbReference type="RefSeq" id="NP_764426.1">
    <property type="nucleotide sequence ID" value="NC_004461.1"/>
</dbReference>
<dbReference type="RefSeq" id="WP_002494957.1">
    <property type="nucleotide sequence ID" value="NZ_WBME01000063.1"/>
</dbReference>
<dbReference type="SMR" id="Q8CPK0"/>
<dbReference type="GeneID" id="50018990"/>
<dbReference type="KEGG" id="sep:SE_0871"/>
<dbReference type="PATRIC" id="fig|176280.10.peg.844"/>
<dbReference type="eggNOG" id="COG0597">
    <property type="taxonomic scope" value="Bacteria"/>
</dbReference>
<dbReference type="HOGENOM" id="CLU_083252_3_0_9"/>
<dbReference type="OrthoDB" id="9810259at2"/>
<dbReference type="UniPathway" id="UPA00665"/>
<dbReference type="Proteomes" id="UP000001411">
    <property type="component" value="Chromosome"/>
</dbReference>
<dbReference type="GO" id="GO:0005886">
    <property type="term" value="C:plasma membrane"/>
    <property type="evidence" value="ECO:0007669"/>
    <property type="project" value="UniProtKB-SubCell"/>
</dbReference>
<dbReference type="GO" id="GO:0004190">
    <property type="term" value="F:aspartic-type endopeptidase activity"/>
    <property type="evidence" value="ECO:0007669"/>
    <property type="project" value="UniProtKB-UniRule"/>
</dbReference>
<dbReference type="GO" id="GO:0006508">
    <property type="term" value="P:proteolysis"/>
    <property type="evidence" value="ECO:0007669"/>
    <property type="project" value="UniProtKB-KW"/>
</dbReference>
<dbReference type="HAMAP" id="MF_00161">
    <property type="entry name" value="LspA"/>
    <property type="match status" value="1"/>
</dbReference>
<dbReference type="InterPro" id="IPR001872">
    <property type="entry name" value="Peptidase_A8"/>
</dbReference>
<dbReference type="NCBIfam" id="TIGR00077">
    <property type="entry name" value="lspA"/>
    <property type="match status" value="1"/>
</dbReference>
<dbReference type="PANTHER" id="PTHR33695">
    <property type="entry name" value="LIPOPROTEIN SIGNAL PEPTIDASE"/>
    <property type="match status" value="1"/>
</dbReference>
<dbReference type="PANTHER" id="PTHR33695:SF1">
    <property type="entry name" value="LIPOPROTEIN SIGNAL PEPTIDASE"/>
    <property type="match status" value="1"/>
</dbReference>
<dbReference type="Pfam" id="PF01252">
    <property type="entry name" value="Peptidase_A8"/>
    <property type="match status" value="1"/>
</dbReference>
<dbReference type="PRINTS" id="PR00781">
    <property type="entry name" value="LIPOSIGPTASE"/>
</dbReference>
<dbReference type="PROSITE" id="PS00855">
    <property type="entry name" value="SPASE_II"/>
    <property type="match status" value="1"/>
</dbReference>
<proteinExistence type="inferred from homology"/>
<feature type="chain" id="PRO_0000178820" description="Lipoprotein signal peptidase">
    <location>
        <begin position="1"/>
        <end position="161"/>
    </location>
</feature>
<feature type="transmembrane region" description="Helical" evidence="1">
    <location>
        <begin position="9"/>
        <end position="29"/>
    </location>
</feature>
<feature type="transmembrane region" description="Helical" evidence="1">
    <location>
        <begin position="63"/>
        <end position="83"/>
    </location>
</feature>
<feature type="transmembrane region" description="Helical" evidence="1">
    <location>
        <begin position="88"/>
        <end position="108"/>
    </location>
</feature>
<feature type="transmembrane region" description="Helical" evidence="1">
    <location>
        <begin position="131"/>
        <end position="151"/>
    </location>
</feature>
<feature type="active site" evidence="1">
    <location>
        <position position="118"/>
    </location>
</feature>
<feature type="active site" evidence="1">
    <location>
        <position position="136"/>
    </location>
</feature>
<gene>
    <name evidence="1" type="primary">lspA</name>
    <name type="ordered locus">SE_0871</name>
</gene>
<name>LSPA_STAES</name>
<comment type="function">
    <text evidence="1">This protein specifically catalyzes the removal of signal peptides from prolipoproteins.</text>
</comment>
<comment type="catalytic activity">
    <reaction evidence="1">
        <text>Release of signal peptides from bacterial membrane prolipoproteins. Hydrolyzes -Xaa-Yaa-Zaa-|-(S,diacylglyceryl)Cys-, in which Xaa is hydrophobic (preferably Leu), and Yaa (Ala or Ser) and Zaa (Gly or Ala) have small, neutral side chains.</text>
        <dbReference type="EC" id="3.4.23.36"/>
    </reaction>
</comment>
<comment type="pathway">
    <text evidence="1">Protein modification; lipoprotein biosynthesis (signal peptide cleavage).</text>
</comment>
<comment type="subcellular location">
    <subcellularLocation>
        <location evidence="1">Cell membrane</location>
        <topology evidence="1">Multi-pass membrane protein</topology>
    </subcellularLocation>
</comment>
<comment type="similarity">
    <text evidence="1">Belongs to the peptidase A8 family.</text>
</comment>
<comment type="sequence caution" evidence="2">
    <conflict type="erroneous initiation">
        <sequence resource="EMBL-CDS" id="AAO04468"/>
    </conflict>
</comment>
<protein>
    <recommendedName>
        <fullName evidence="1">Lipoprotein signal peptidase</fullName>
        <ecNumber evidence="1">3.4.23.36</ecNumber>
    </recommendedName>
    <alternativeName>
        <fullName evidence="1">Prolipoprotein signal peptidase</fullName>
    </alternativeName>
    <alternativeName>
        <fullName evidence="1">Signal peptidase II</fullName>
        <shortName evidence="1">SPase II</shortName>
    </alternativeName>
</protein>
<reference key="1">
    <citation type="journal article" date="2003" name="Mol. Microbiol.">
        <title>Genome-based analysis of virulence genes in a non-biofilm-forming Staphylococcus epidermidis strain (ATCC 12228).</title>
        <authorList>
            <person name="Zhang Y.-Q."/>
            <person name="Ren S.-X."/>
            <person name="Li H.-L."/>
            <person name="Wang Y.-X."/>
            <person name="Fu G."/>
            <person name="Yang J."/>
            <person name="Qin Z.-Q."/>
            <person name="Miao Y.-G."/>
            <person name="Wang W.-Y."/>
            <person name="Chen R.-S."/>
            <person name="Shen Y."/>
            <person name="Chen Z."/>
            <person name="Yuan Z.-H."/>
            <person name="Zhao G.-P."/>
            <person name="Qu D."/>
            <person name="Danchin A."/>
            <person name="Wen Y.-M."/>
        </authorList>
    </citation>
    <scope>NUCLEOTIDE SEQUENCE [LARGE SCALE GENOMIC DNA]</scope>
    <source>
        <strain>ATCC 12228 / FDA PCI 1200</strain>
    </source>
</reference>
<organism>
    <name type="scientific">Staphylococcus epidermidis (strain ATCC 12228 / FDA PCI 1200)</name>
    <dbReference type="NCBI Taxonomy" id="176280"/>
    <lineage>
        <taxon>Bacteria</taxon>
        <taxon>Bacillati</taxon>
        <taxon>Bacillota</taxon>
        <taxon>Bacilli</taxon>
        <taxon>Bacillales</taxon>
        <taxon>Staphylococcaceae</taxon>
        <taxon>Staphylococcus</taxon>
    </lineage>
</organism>
<evidence type="ECO:0000255" key="1">
    <source>
        <dbReference type="HAMAP-Rule" id="MF_00161"/>
    </source>
</evidence>
<evidence type="ECO:0000305" key="2"/>
<accession>Q8CPK0</accession>